<feature type="chain" id="PRO_0000460942" description="Trafficking protein particle complex subunit 8">
    <location>
        <begin position="1"/>
        <end position="1282"/>
    </location>
</feature>
<feature type="region of interest" description="Disordered" evidence="2">
    <location>
        <begin position="245"/>
        <end position="287"/>
    </location>
</feature>
<feature type="compositionally biased region" description="Low complexity" evidence="2">
    <location>
        <begin position="255"/>
        <end position="273"/>
    </location>
</feature>
<reference evidence="5" key="1">
    <citation type="journal article" date="1998" name="Science">
        <title>Genome sequence of the nematode C. elegans: a platform for investigating biology.</title>
        <authorList>
            <consortium name="The C. elegans sequencing consortium"/>
        </authorList>
    </citation>
    <scope>NUCLEOTIDE SEQUENCE [LARGE SCALE GENOMIC DNA]</scope>
    <source>
        <strain evidence="5">Bristol N2</strain>
    </source>
</reference>
<reference evidence="4" key="2">
    <citation type="journal article" date="2020" name="Sci. Adv.">
        <title>Broadly conserved roles of TMEM131 family proteins in intracellular collagen assembly and secretory cargo trafficking.</title>
        <authorList>
            <person name="Zhang Z."/>
            <person name="Bai M."/>
            <person name="Barbosa G.O."/>
            <person name="Chen A."/>
            <person name="Wei Y."/>
            <person name="Luo S."/>
            <person name="Wang X."/>
            <person name="Wang B."/>
            <person name="Tsukui T."/>
            <person name="Li H."/>
            <person name="Sheppard D."/>
            <person name="Kornberg T.B."/>
            <person name="Ma D.K."/>
        </authorList>
    </citation>
    <scope>FUNCTION</scope>
    <scope>DISRUPTION PHENOTYPE</scope>
</reference>
<proteinExistence type="inferred from homology"/>
<comment type="function">
    <text evidence="1 3">Plays a role in endoplasmic reticulum to Golgi apparatus trafficking at a very early stage (By similarity). Involved in collagen secretion (PubMed:32095531).</text>
</comment>
<comment type="disruption phenotype">
    <text evidence="3">RNAi-mediated knockdown reduces the abundance of collagen in the cuticle.</text>
</comment>
<evidence type="ECO:0000250" key="1">
    <source>
        <dbReference type="UniProtKB" id="Q9Y2L5"/>
    </source>
</evidence>
<evidence type="ECO:0000256" key="2">
    <source>
        <dbReference type="SAM" id="MobiDB-lite"/>
    </source>
</evidence>
<evidence type="ECO:0000269" key="3">
    <source>
    </source>
</evidence>
<evidence type="ECO:0000305" key="4"/>
<evidence type="ECO:0000312" key="5">
    <source>
        <dbReference type="Proteomes" id="UP000001940"/>
    </source>
</evidence>
<evidence type="ECO:0000312" key="6">
    <source>
        <dbReference type="WormBase" id="F46F11.9b"/>
    </source>
</evidence>
<keyword id="KW-1185">Reference proteome</keyword>
<accession>Q9BI63</accession>
<organism evidence="5">
    <name type="scientific">Caenorhabditis elegans</name>
    <dbReference type="NCBI Taxonomy" id="6239"/>
    <lineage>
        <taxon>Eukaryota</taxon>
        <taxon>Metazoa</taxon>
        <taxon>Ecdysozoa</taxon>
        <taxon>Nematoda</taxon>
        <taxon>Chromadorea</taxon>
        <taxon>Rhabditida</taxon>
        <taxon>Rhabditina</taxon>
        <taxon>Rhabditomorpha</taxon>
        <taxon>Rhabditoidea</taxon>
        <taxon>Rhabditidae</taxon>
        <taxon>Peloderinae</taxon>
        <taxon>Caenorhabditis</taxon>
    </lineage>
</organism>
<name>TPPC8_CAEEL</name>
<sequence>MSSVSPSPLIALISSECSQKHAHNRGFKSLSHFIFPFTSHECQVREPIDNLKASQRIRLDIRDISSDGHLLTLSVLPYVLIQALKTCTDVSQSIKLFRDVLARCSEPSEHESFGHYLACIFVVSTEDENPLGEFSKMIQTQQTLYNTTSTLMIPGHCSTPKWAAPHAKTPRHYILLHDSRSPRSSTERRDELLAQMCATYGNDNCQMLQLDSDSESAEMKGVWDEIDEFNDVLEKGLEEAHQHSTDAIAPGPNGASNQQSPSSPTSSVATISSTMPAVGSVSPNSHPNSTVVWKSSKKLASLADAKAVQAILSKFLDVCLIPYVEKEMRFLYETAGQKKGIGKSFTSMKRWFGSGTALSNMATPITYAWDSSEMQTRRLADLLLMFGFPNSAFEQYRGLKRDLEADKAMAAHAVALEMCCVALHSAQPQLNANQFMIKYLETPVSLLIEHAKFRRYPSILRCAFNIADIYSDLGLHKEAALNLAKVSSIEGDHLVAVAQTLAAEQFEKAGMGRKASFHRVLAANRFSNAAIPALSFDCYRLALPAFDKKHWGVLDEHLAVRLLEEGQKAGVMTTDIASECIRRLVAVCPKLSPSLQTERLRTIVNALDIYFPHRNEPVEMLTDIPKVEMETVKAIYGERPLWNEIDENEHQSVSSDGWITVERAAHHALFGASAPYRGMQLVSDEHSDNQKIRETPAGERFRVMVDLTNPLKIPIHLQNLRLSVSDIHNQSGIEGSEKSIPELGALEHLQLDPEETKTIELYVFPRVGCLKFRVDGLLFQLAVDQKDVEARVPLKCRGKRLNKTAKQQKSKIYTNDERLSATVAQKPWPLVEFRVIKSPHQWSYCDQAQRYQLEIENIGHENVMSMCLATNAFDRVAAGSIDENEHHQQFKMNLAANNAKVATFRFEEGSTSSTDSFLKIGEKKRIFFDVRSSDEPTGSTVAPKQSNTVILIAYRSSNGTMRQWRRVIDGERRRLIALTAEILDLDTKSFSIHLKNCVAVSQAALSRVEILRIRTDRNEASTGIKNDCSTTVLPSVNRRVEIESEQTDTIVARLVPLSQGETIKESWLTTTTSVTPPKWPCPAEIHSTMDDEFASKIAEKIGILWKANIVNNEGLVTSFIGESFIDDPFVKLKTLKKDDSVLSSLRISCETTAKEISHNFSASHICELPITLLIQNKDLQRRPVSVSIKLSSKVREPVDGIHLVAPENRHQMWIDRPVRKQTIGIDDEAKLEMKWKITHAAVYDVGGANLSIEAIFEGSNDAVIFKVPSVLSVVKSSSYTVV</sequence>
<protein>
    <recommendedName>
        <fullName evidence="4">Trafficking protein particle complex subunit 8</fullName>
    </recommendedName>
</protein>
<gene>
    <name evidence="6" type="primary">trpp-8</name>
    <name evidence="6" type="ORF">F46F11.9</name>
</gene>
<dbReference type="EMBL" id="BX284601">
    <property type="protein sequence ID" value="CCD71332.1"/>
    <property type="molecule type" value="Genomic_DNA"/>
</dbReference>
<dbReference type="RefSeq" id="NP_491642.2">
    <property type="nucleotide sequence ID" value="NM_059241.6"/>
</dbReference>
<dbReference type="SMR" id="Q9BI63"/>
<dbReference type="FunCoup" id="Q9BI63">
    <property type="interactions" value="2165"/>
</dbReference>
<dbReference type="STRING" id="6239.F46F11.9b.1"/>
<dbReference type="PaxDb" id="6239-F46F11.9b"/>
<dbReference type="EnsemblMetazoa" id="F46F11.9b.1">
    <property type="protein sequence ID" value="F46F11.9b.1"/>
    <property type="gene ID" value="WBGene00018512"/>
</dbReference>
<dbReference type="GeneID" id="172217"/>
<dbReference type="KEGG" id="cel:CELE_F46F11.9"/>
<dbReference type="UCSC" id="F46F11.9b">
    <property type="organism name" value="c. elegans"/>
</dbReference>
<dbReference type="AGR" id="WB:WBGene00018512"/>
<dbReference type="CTD" id="172217"/>
<dbReference type="WormBase" id="F46F11.9b">
    <property type="protein sequence ID" value="CE30537"/>
    <property type="gene ID" value="WBGene00018512"/>
    <property type="gene designation" value="trpp-8"/>
</dbReference>
<dbReference type="eggNOG" id="KOG1938">
    <property type="taxonomic scope" value="Eukaryota"/>
</dbReference>
<dbReference type="GeneTree" id="ENSGT00390000000568"/>
<dbReference type="HOGENOM" id="CLU_261376_0_0_1"/>
<dbReference type="InParanoid" id="Q9BI63"/>
<dbReference type="OMA" id="GVRKWFG"/>
<dbReference type="OrthoDB" id="203724at2759"/>
<dbReference type="PhylomeDB" id="Q9BI63"/>
<dbReference type="Reactome" id="R-CEL-8876198">
    <property type="pathway name" value="RAB GEFs exchange GTP for GDP on RABs"/>
</dbReference>
<dbReference type="Proteomes" id="UP000001940">
    <property type="component" value="Chromosome I"/>
</dbReference>
<dbReference type="Bgee" id="WBGene00018512">
    <property type="expression patterns" value="Expressed in adult organism and 3 other cell types or tissues"/>
</dbReference>
<dbReference type="ExpressionAtlas" id="Q9BI63">
    <property type="expression patterns" value="baseline and differential"/>
</dbReference>
<dbReference type="GO" id="GO:1990072">
    <property type="term" value="C:TRAPPIII protein complex"/>
    <property type="evidence" value="ECO:0000318"/>
    <property type="project" value="GO_Central"/>
</dbReference>
<dbReference type="GO" id="GO:0032964">
    <property type="term" value="P:collagen biosynthetic process"/>
    <property type="evidence" value="ECO:0000315"/>
    <property type="project" value="UniProtKB"/>
</dbReference>
<dbReference type="InterPro" id="IPR024420">
    <property type="entry name" value="TRAPP_III_complex_Trs85"/>
</dbReference>
<dbReference type="PANTHER" id="PTHR12975:SF6">
    <property type="entry name" value="TRAFFICKING PROTEIN PARTICLE COMPLEX SUBUNIT 8"/>
    <property type="match status" value="1"/>
</dbReference>
<dbReference type="PANTHER" id="PTHR12975">
    <property type="entry name" value="TRANSPORT PROTEIN TRAPP"/>
    <property type="match status" value="1"/>
</dbReference>
<dbReference type="Pfam" id="PF24542">
    <property type="entry name" value="Ig_TPPC8_C"/>
    <property type="match status" value="1"/>
</dbReference>
<dbReference type="Pfam" id="PF12739">
    <property type="entry name" value="TRAPPC-Trs85"/>
    <property type="match status" value="1"/>
</dbReference>